<sequence length="147" mass="15804">MASHRLLLLCLAGLVFVSEAGPTGAGESKCPLMVKVLDAVRGSPAVNVAVNVFKRAADETWEPFASGKTSESGELHGLTTEEEFVEGIYKVEIDTKSYWKALGISPFHEHAEVVFAANDSGPRRYTIAALLSPYSYSTTAVVTNPKE</sequence>
<gene>
    <name type="primary">TTR</name>
</gene>
<protein>
    <recommendedName>
        <fullName>Transthyretin</fullName>
    </recommendedName>
    <alternativeName>
        <fullName>Prealbumin</fullName>
    </alternativeName>
</protein>
<dbReference type="EMBL" id="CR925931">
    <property type="protein sequence ID" value="CAI29591.1"/>
    <property type="molecule type" value="mRNA"/>
</dbReference>
<dbReference type="RefSeq" id="NP_001127064.1">
    <property type="nucleotide sequence ID" value="NM_001133592.2"/>
</dbReference>
<dbReference type="SMR" id="Q5NVS2"/>
<dbReference type="FunCoup" id="Q5NVS2">
    <property type="interactions" value="49"/>
</dbReference>
<dbReference type="STRING" id="9601.ENSPPYP00000010206"/>
<dbReference type="GlyCosmos" id="Q5NVS2">
    <property type="glycosylation" value="1 site, No reported glycans"/>
</dbReference>
<dbReference type="GeneID" id="100174094"/>
<dbReference type="KEGG" id="pon:100174094"/>
<dbReference type="CTD" id="7276"/>
<dbReference type="eggNOG" id="KOG3006">
    <property type="taxonomic scope" value="Eukaryota"/>
</dbReference>
<dbReference type="InParanoid" id="Q5NVS2"/>
<dbReference type="OrthoDB" id="10265230at2759"/>
<dbReference type="Proteomes" id="UP000001595">
    <property type="component" value="Unplaced"/>
</dbReference>
<dbReference type="GO" id="GO:0005615">
    <property type="term" value="C:extracellular space"/>
    <property type="evidence" value="ECO:0007669"/>
    <property type="project" value="TreeGrafter"/>
</dbReference>
<dbReference type="GO" id="GO:0005179">
    <property type="term" value="F:hormone activity"/>
    <property type="evidence" value="ECO:0007669"/>
    <property type="project" value="UniProtKB-KW"/>
</dbReference>
<dbReference type="GO" id="GO:0070324">
    <property type="term" value="F:thyroid hormone binding"/>
    <property type="evidence" value="ECO:0007669"/>
    <property type="project" value="TreeGrafter"/>
</dbReference>
<dbReference type="GO" id="GO:0006144">
    <property type="term" value="P:purine nucleobase metabolic process"/>
    <property type="evidence" value="ECO:0007669"/>
    <property type="project" value="TreeGrafter"/>
</dbReference>
<dbReference type="CDD" id="cd05821">
    <property type="entry name" value="TLP_Transthyretin"/>
    <property type="match status" value="1"/>
</dbReference>
<dbReference type="FunFam" id="2.60.40.180:FF:000002">
    <property type="entry name" value="Transthyretin"/>
    <property type="match status" value="1"/>
</dbReference>
<dbReference type="Gene3D" id="2.60.40.180">
    <property type="entry name" value="Transthyretin/hydroxyisourate hydrolase domain"/>
    <property type="match status" value="1"/>
</dbReference>
<dbReference type="InterPro" id="IPR023418">
    <property type="entry name" value="Thyroxine_BS"/>
</dbReference>
<dbReference type="InterPro" id="IPR000895">
    <property type="entry name" value="Transthyretin/HIU_hydrolase"/>
</dbReference>
<dbReference type="InterPro" id="IPR023416">
    <property type="entry name" value="Transthyretin/HIU_hydrolase_d"/>
</dbReference>
<dbReference type="InterPro" id="IPR036817">
    <property type="entry name" value="Transthyretin/HIU_hydrolase_sf"/>
</dbReference>
<dbReference type="InterPro" id="IPR023419">
    <property type="entry name" value="Transthyretin_CS"/>
</dbReference>
<dbReference type="PANTHER" id="PTHR10395:SF12">
    <property type="entry name" value="TRANSTHYRETIN"/>
    <property type="match status" value="1"/>
</dbReference>
<dbReference type="PANTHER" id="PTHR10395">
    <property type="entry name" value="URICASE AND TRANSTHYRETIN-RELATED"/>
    <property type="match status" value="1"/>
</dbReference>
<dbReference type="Pfam" id="PF00576">
    <property type="entry name" value="Transthyretin"/>
    <property type="match status" value="1"/>
</dbReference>
<dbReference type="PRINTS" id="PR00189">
    <property type="entry name" value="TRNSTHYRETIN"/>
</dbReference>
<dbReference type="SMART" id="SM00095">
    <property type="entry name" value="TR_THY"/>
    <property type="match status" value="1"/>
</dbReference>
<dbReference type="SUPFAM" id="SSF49472">
    <property type="entry name" value="Transthyretin (synonym: prealbumin)"/>
    <property type="match status" value="1"/>
</dbReference>
<dbReference type="PROSITE" id="PS00768">
    <property type="entry name" value="TRANSTHYRETIN_1"/>
    <property type="match status" value="1"/>
</dbReference>
<dbReference type="PROSITE" id="PS00769">
    <property type="entry name" value="TRANSTHYRETIN_2"/>
    <property type="match status" value="1"/>
</dbReference>
<organism>
    <name type="scientific">Pongo abelii</name>
    <name type="common">Sumatran orangutan</name>
    <name type="synonym">Pongo pygmaeus abelii</name>
    <dbReference type="NCBI Taxonomy" id="9601"/>
    <lineage>
        <taxon>Eukaryota</taxon>
        <taxon>Metazoa</taxon>
        <taxon>Chordata</taxon>
        <taxon>Craniata</taxon>
        <taxon>Vertebrata</taxon>
        <taxon>Euteleostomi</taxon>
        <taxon>Mammalia</taxon>
        <taxon>Eutheria</taxon>
        <taxon>Euarchontoglires</taxon>
        <taxon>Primates</taxon>
        <taxon>Haplorrhini</taxon>
        <taxon>Catarrhini</taxon>
        <taxon>Hominidae</taxon>
        <taxon>Pongo</taxon>
    </lineage>
</organism>
<name>TTHY_PONAB</name>
<reference key="1">
    <citation type="submission" date="2004-11" db="EMBL/GenBank/DDBJ databases">
        <authorList>
            <consortium name="The German cDNA consortium"/>
        </authorList>
    </citation>
    <scope>NUCLEOTIDE SEQUENCE [LARGE SCALE MRNA]</scope>
    <source>
        <tissue>Liver</tissue>
    </source>
</reference>
<keyword id="KW-0301">Gamma-carboxyglutamic acid</keyword>
<keyword id="KW-0325">Glycoprotein</keyword>
<keyword id="KW-0372">Hormone</keyword>
<keyword id="KW-0597">Phosphoprotein</keyword>
<keyword id="KW-1185">Reference proteome</keyword>
<keyword id="KW-0964">Secreted</keyword>
<keyword id="KW-0732">Signal</keyword>
<keyword id="KW-0765">Sulfation</keyword>
<keyword id="KW-0795">Thyroid hormone</keyword>
<keyword id="KW-0813">Transport</keyword>
<proteinExistence type="evidence at transcript level"/>
<comment type="function">
    <text evidence="1">Thyroid hormone-binding protein. Probably transports thyroxine from the bloodstream to the brain (By similarity).</text>
</comment>
<comment type="subunit">
    <text evidence="1">Homotetramer. Dimer of dimers. In the homotetramer, subunits assemble around a central channel that can accommodate two ligand molecules. Interacts with RBP4 (By similarity).</text>
</comment>
<comment type="subcellular location">
    <subcellularLocation>
        <location evidence="1">Secreted</location>
    </subcellularLocation>
</comment>
<comment type="tissue specificity">
    <text>Detected in liver.</text>
</comment>
<comment type="PTM">
    <text evidence="2">Sulfonation of the reactive cysteine Cys-30 enhances the stability of the native conformation of TTR, avoiding misassembly of the protein leading to amyloid formation.</text>
</comment>
<comment type="similarity">
    <text evidence="5">Belongs to the transthyretin family.</text>
</comment>
<accession>Q5NVS2</accession>
<feature type="signal peptide" evidence="1">
    <location>
        <begin position="1"/>
        <end position="20"/>
    </location>
</feature>
<feature type="chain" id="PRO_0000045960" description="Transthyretin">
    <location>
        <begin position="21"/>
        <end position="147"/>
    </location>
</feature>
<feature type="binding site" evidence="2">
    <location>
        <position position="35"/>
    </location>
    <ligand>
        <name>L-thyroxine</name>
        <dbReference type="ChEBI" id="CHEBI:58448"/>
    </ligand>
</feature>
<feature type="binding site" evidence="2">
    <location>
        <position position="74"/>
    </location>
    <ligand>
        <name>L-thyroxine</name>
        <dbReference type="ChEBI" id="CHEBI:58448"/>
    </ligand>
</feature>
<feature type="binding site" evidence="2">
    <location>
        <position position="137"/>
    </location>
    <ligand>
        <name>L-thyroxine</name>
        <dbReference type="ChEBI" id="CHEBI:58448"/>
    </ligand>
</feature>
<feature type="modified residue" description="Sulfocysteine" evidence="2">
    <location>
        <position position="30"/>
    </location>
</feature>
<feature type="modified residue" description="4-carboxyglutamate" evidence="2">
    <location>
        <position position="62"/>
    </location>
</feature>
<feature type="modified residue" description="Phosphoserine" evidence="3">
    <location>
        <position position="72"/>
    </location>
</feature>
<feature type="glycosylation site" description="N-linked (GlcNAc...) asparagine" evidence="4">
    <location>
        <position position="118"/>
    </location>
</feature>
<evidence type="ECO:0000250" key="1"/>
<evidence type="ECO:0000250" key="2">
    <source>
        <dbReference type="UniProtKB" id="P02766"/>
    </source>
</evidence>
<evidence type="ECO:0000250" key="3">
    <source>
        <dbReference type="UniProtKB" id="P02767"/>
    </source>
</evidence>
<evidence type="ECO:0000255" key="4"/>
<evidence type="ECO:0000305" key="5"/>